<name>RL16_YERE8</name>
<comment type="function">
    <text evidence="1">Binds 23S rRNA and is also seen to make contacts with the A and possibly P site tRNAs.</text>
</comment>
<comment type="subunit">
    <text evidence="1">Part of the 50S ribosomal subunit.</text>
</comment>
<comment type="similarity">
    <text evidence="1">Belongs to the universal ribosomal protein uL16 family.</text>
</comment>
<accession>A1JS27</accession>
<gene>
    <name evidence="1" type="primary">rplP</name>
    <name type="ordered locus">YE3916</name>
</gene>
<sequence>MLQPKRTKFRKMHKGRNRGLAQGTDVSFGEFGLKACGRCRLTARQIEAARRAMTRAIKRQGKVWIRVFPDKPITEKPLEVRMGKGKGNVEYWVALIQPGKVLFEMAGVPEETAREAFKLAAAKLPVGTTFVTKTVM</sequence>
<keyword id="KW-0687">Ribonucleoprotein</keyword>
<keyword id="KW-0689">Ribosomal protein</keyword>
<keyword id="KW-0694">RNA-binding</keyword>
<keyword id="KW-0699">rRNA-binding</keyword>
<keyword id="KW-0820">tRNA-binding</keyword>
<feature type="chain" id="PRO_1000054732" description="Large ribosomal subunit protein uL16">
    <location>
        <begin position="1"/>
        <end position="136"/>
    </location>
</feature>
<protein>
    <recommendedName>
        <fullName evidence="1">Large ribosomal subunit protein uL16</fullName>
    </recommendedName>
    <alternativeName>
        <fullName evidence="2">50S ribosomal protein L16</fullName>
    </alternativeName>
</protein>
<dbReference type="EMBL" id="AM286415">
    <property type="protein sequence ID" value="CAL13935.1"/>
    <property type="molecule type" value="Genomic_DNA"/>
</dbReference>
<dbReference type="RefSeq" id="WP_002218940.1">
    <property type="nucleotide sequence ID" value="NC_008800.1"/>
</dbReference>
<dbReference type="RefSeq" id="YP_001008061.1">
    <property type="nucleotide sequence ID" value="NC_008800.1"/>
</dbReference>
<dbReference type="SMR" id="A1JS27"/>
<dbReference type="GeneID" id="97454238"/>
<dbReference type="KEGG" id="yen:YE3916"/>
<dbReference type="PATRIC" id="fig|393305.7.peg.4166"/>
<dbReference type="eggNOG" id="COG0197">
    <property type="taxonomic scope" value="Bacteria"/>
</dbReference>
<dbReference type="HOGENOM" id="CLU_078858_2_1_6"/>
<dbReference type="OrthoDB" id="9802589at2"/>
<dbReference type="Proteomes" id="UP000000642">
    <property type="component" value="Chromosome"/>
</dbReference>
<dbReference type="GO" id="GO:0022625">
    <property type="term" value="C:cytosolic large ribosomal subunit"/>
    <property type="evidence" value="ECO:0007669"/>
    <property type="project" value="TreeGrafter"/>
</dbReference>
<dbReference type="GO" id="GO:0019843">
    <property type="term" value="F:rRNA binding"/>
    <property type="evidence" value="ECO:0007669"/>
    <property type="project" value="UniProtKB-UniRule"/>
</dbReference>
<dbReference type="GO" id="GO:0003735">
    <property type="term" value="F:structural constituent of ribosome"/>
    <property type="evidence" value="ECO:0007669"/>
    <property type="project" value="InterPro"/>
</dbReference>
<dbReference type="GO" id="GO:0000049">
    <property type="term" value="F:tRNA binding"/>
    <property type="evidence" value="ECO:0007669"/>
    <property type="project" value="UniProtKB-KW"/>
</dbReference>
<dbReference type="GO" id="GO:0006412">
    <property type="term" value="P:translation"/>
    <property type="evidence" value="ECO:0007669"/>
    <property type="project" value="UniProtKB-UniRule"/>
</dbReference>
<dbReference type="CDD" id="cd01433">
    <property type="entry name" value="Ribosomal_L16_L10e"/>
    <property type="match status" value="1"/>
</dbReference>
<dbReference type="FunFam" id="3.90.1170.10:FF:000001">
    <property type="entry name" value="50S ribosomal protein L16"/>
    <property type="match status" value="1"/>
</dbReference>
<dbReference type="Gene3D" id="3.90.1170.10">
    <property type="entry name" value="Ribosomal protein L10e/L16"/>
    <property type="match status" value="1"/>
</dbReference>
<dbReference type="HAMAP" id="MF_01342">
    <property type="entry name" value="Ribosomal_uL16"/>
    <property type="match status" value="1"/>
</dbReference>
<dbReference type="InterPro" id="IPR047873">
    <property type="entry name" value="Ribosomal_uL16"/>
</dbReference>
<dbReference type="InterPro" id="IPR000114">
    <property type="entry name" value="Ribosomal_uL16_bact-type"/>
</dbReference>
<dbReference type="InterPro" id="IPR020798">
    <property type="entry name" value="Ribosomal_uL16_CS"/>
</dbReference>
<dbReference type="InterPro" id="IPR016180">
    <property type="entry name" value="Ribosomal_uL16_dom"/>
</dbReference>
<dbReference type="InterPro" id="IPR036920">
    <property type="entry name" value="Ribosomal_uL16_sf"/>
</dbReference>
<dbReference type="NCBIfam" id="TIGR01164">
    <property type="entry name" value="rplP_bact"/>
    <property type="match status" value="1"/>
</dbReference>
<dbReference type="PANTHER" id="PTHR12220">
    <property type="entry name" value="50S/60S RIBOSOMAL PROTEIN L16"/>
    <property type="match status" value="1"/>
</dbReference>
<dbReference type="PANTHER" id="PTHR12220:SF13">
    <property type="entry name" value="LARGE RIBOSOMAL SUBUNIT PROTEIN UL16M"/>
    <property type="match status" value="1"/>
</dbReference>
<dbReference type="Pfam" id="PF00252">
    <property type="entry name" value="Ribosomal_L16"/>
    <property type="match status" value="1"/>
</dbReference>
<dbReference type="PRINTS" id="PR00060">
    <property type="entry name" value="RIBOSOMALL16"/>
</dbReference>
<dbReference type="SUPFAM" id="SSF54686">
    <property type="entry name" value="Ribosomal protein L16p/L10e"/>
    <property type="match status" value="1"/>
</dbReference>
<dbReference type="PROSITE" id="PS00586">
    <property type="entry name" value="RIBOSOMAL_L16_1"/>
    <property type="match status" value="1"/>
</dbReference>
<dbReference type="PROSITE" id="PS00701">
    <property type="entry name" value="RIBOSOMAL_L16_2"/>
    <property type="match status" value="1"/>
</dbReference>
<proteinExistence type="inferred from homology"/>
<organism>
    <name type="scientific">Yersinia enterocolitica serotype O:8 / biotype 1B (strain NCTC 13174 / 8081)</name>
    <dbReference type="NCBI Taxonomy" id="393305"/>
    <lineage>
        <taxon>Bacteria</taxon>
        <taxon>Pseudomonadati</taxon>
        <taxon>Pseudomonadota</taxon>
        <taxon>Gammaproteobacteria</taxon>
        <taxon>Enterobacterales</taxon>
        <taxon>Yersiniaceae</taxon>
        <taxon>Yersinia</taxon>
    </lineage>
</organism>
<evidence type="ECO:0000255" key="1">
    <source>
        <dbReference type="HAMAP-Rule" id="MF_01342"/>
    </source>
</evidence>
<evidence type="ECO:0000305" key="2"/>
<reference key="1">
    <citation type="journal article" date="2006" name="PLoS Genet.">
        <title>The complete genome sequence and comparative genome analysis of the high pathogenicity Yersinia enterocolitica strain 8081.</title>
        <authorList>
            <person name="Thomson N.R."/>
            <person name="Howard S."/>
            <person name="Wren B.W."/>
            <person name="Holden M.T.G."/>
            <person name="Crossman L."/>
            <person name="Challis G.L."/>
            <person name="Churcher C."/>
            <person name="Mungall K."/>
            <person name="Brooks K."/>
            <person name="Chillingworth T."/>
            <person name="Feltwell T."/>
            <person name="Abdellah Z."/>
            <person name="Hauser H."/>
            <person name="Jagels K."/>
            <person name="Maddison M."/>
            <person name="Moule S."/>
            <person name="Sanders M."/>
            <person name="Whitehead S."/>
            <person name="Quail M.A."/>
            <person name="Dougan G."/>
            <person name="Parkhill J."/>
            <person name="Prentice M.B."/>
        </authorList>
    </citation>
    <scope>NUCLEOTIDE SEQUENCE [LARGE SCALE GENOMIC DNA]</scope>
    <source>
        <strain>NCTC 13174 / 8081</strain>
    </source>
</reference>